<evidence type="ECO:0000250" key="1"/>
<evidence type="ECO:0000269" key="2">
    <source>
    </source>
</evidence>
<evidence type="ECO:0000305" key="3"/>
<comment type="function">
    <text evidence="1">May act as an acid--thiol ligase that activates carboxylic acids by forming acyl-CoAs.</text>
</comment>
<comment type="tissue specificity">
    <text evidence="2">Expressed at low levels in roots, leaves, stems, flowers and developing seeds.</text>
</comment>
<comment type="similarity">
    <text evidence="3">Belongs to the ATP-dependent AMP-binding enzyme family.</text>
</comment>
<gene>
    <name type="primary">AAE8</name>
    <name type="synonym">AMPBP8</name>
    <name type="ordered locus">At1g75960</name>
    <name type="ORF">T4O12.18</name>
</gene>
<name>AAE8_ARATH</name>
<protein>
    <recommendedName>
        <fullName>Probable acyl-activating enzyme 8</fullName>
        <ecNumber>6.2.1.-</ecNumber>
    </recommendedName>
    <alternativeName>
        <fullName>AMP-binding protein 8</fullName>
        <shortName>AtAMPBP8</shortName>
    </alternativeName>
</protein>
<reference key="1">
    <citation type="journal article" date="2002" name="Plant Physiol.">
        <title>Arabidopsis contains nine long-chain acyl-coenzyme A synthetase genes that participate in fatty acid and glycerolipid metabolism.</title>
        <authorList>
            <person name="Shockey J.M."/>
            <person name="Fulda M.S."/>
            <person name="Browse J.A."/>
        </authorList>
    </citation>
    <scope>NUCLEOTIDE SEQUENCE [MRNA]</scope>
</reference>
<reference key="2">
    <citation type="journal article" date="2000" name="Nature">
        <title>Sequence and analysis of chromosome 1 of the plant Arabidopsis thaliana.</title>
        <authorList>
            <person name="Theologis A."/>
            <person name="Ecker J.R."/>
            <person name="Palm C.J."/>
            <person name="Federspiel N.A."/>
            <person name="Kaul S."/>
            <person name="White O."/>
            <person name="Alonso J."/>
            <person name="Altafi H."/>
            <person name="Araujo R."/>
            <person name="Bowman C.L."/>
            <person name="Brooks S.Y."/>
            <person name="Buehler E."/>
            <person name="Chan A."/>
            <person name="Chao Q."/>
            <person name="Chen H."/>
            <person name="Cheuk R.F."/>
            <person name="Chin C.W."/>
            <person name="Chung M.K."/>
            <person name="Conn L."/>
            <person name="Conway A.B."/>
            <person name="Conway A.R."/>
            <person name="Creasy T.H."/>
            <person name="Dewar K."/>
            <person name="Dunn P."/>
            <person name="Etgu P."/>
            <person name="Feldblyum T.V."/>
            <person name="Feng J.-D."/>
            <person name="Fong B."/>
            <person name="Fujii C.Y."/>
            <person name="Gill J.E."/>
            <person name="Goldsmith A.D."/>
            <person name="Haas B."/>
            <person name="Hansen N.F."/>
            <person name="Hughes B."/>
            <person name="Huizar L."/>
            <person name="Hunter J.L."/>
            <person name="Jenkins J."/>
            <person name="Johnson-Hopson C."/>
            <person name="Khan S."/>
            <person name="Khaykin E."/>
            <person name="Kim C.J."/>
            <person name="Koo H.L."/>
            <person name="Kremenetskaia I."/>
            <person name="Kurtz D.B."/>
            <person name="Kwan A."/>
            <person name="Lam B."/>
            <person name="Langin-Hooper S."/>
            <person name="Lee A."/>
            <person name="Lee J.M."/>
            <person name="Lenz C.A."/>
            <person name="Li J.H."/>
            <person name="Li Y.-P."/>
            <person name="Lin X."/>
            <person name="Liu S.X."/>
            <person name="Liu Z.A."/>
            <person name="Luros J.S."/>
            <person name="Maiti R."/>
            <person name="Marziali A."/>
            <person name="Militscher J."/>
            <person name="Miranda M."/>
            <person name="Nguyen M."/>
            <person name="Nierman W.C."/>
            <person name="Osborne B.I."/>
            <person name="Pai G."/>
            <person name="Peterson J."/>
            <person name="Pham P.K."/>
            <person name="Rizzo M."/>
            <person name="Rooney T."/>
            <person name="Rowley D."/>
            <person name="Sakano H."/>
            <person name="Salzberg S.L."/>
            <person name="Schwartz J.R."/>
            <person name="Shinn P."/>
            <person name="Southwick A.M."/>
            <person name="Sun H."/>
            <person name="Tallon L.J."/>
            <person name="Tambunga G."/>
            <person name="Toriumi M.J."/>
            <person name="Town C.D."/>
            <person name="Utterback T."/>
            <person name="Van Aken S."/>
            <person name="Vaysberg M."/>
            <person name="Vysotskaia V.S."/>
            <person name="Walker M."/>
            <person name="Wu D."/>
            <person name="Yu G."/>
            <person name="Fraser C.M."/>
            <person name="Venter J.C."/>
            <person name="Davis R.W."/>
        </authorList>
    </citation>
    <scope>NUCLEOTIDE SEQUENCE [LARGE SCALE GENOMIC DNA]</scope>
    <source>
        <strain>cv. Columbia</strain>
    </source>
</reference>
<reference key="3">
    <citation type="journal article" date="2017" name="Plant J.">
        <title>Araport11: a complete reannotation of the Arabidopsis thaliana reference genome.</title>
        <authorList>
            <person name="Cheng C.Y."/>
            <person name="Krishnakumar V."/>
            <person name="Chan A.P."/>
            <person name="Thibaud-Nissen F."/>
            <person name="Schobel S."/>
            <person name="Town C.D."/>
        </authorList>
    </citation>
    <scope>GENOME REANNOTATION</scope>
    <source>
        <strain>cv. Columbia</strain>
    </source>
</reference>
<reference key="4">
    <citation type="journal article" date="2003" name="Science">
        <title>Empirical analysis of transcriptional activity in the Arabidopsis genome.</title>
        <authorList>
            <person name="Yamada K."/>
            <person name="Lim J."/>
            <person name="Dale J.M."/>
            <person name="Chen H."/>
            <person name="Shinn P."/>
            <person name="Palm C.J."/>
            <person name="Southwick A.M."/>
            <person name="Wu H.C."/>
            <person name="Kim C.J."/>
            <person name="Nguyen M."/>
            <person name="Pham P.K."/>
            <person name="Cheuk R.F."/>
            <person name="Karlin-Newmann G."/>
            <person name="Liu S.X."/>
            <person name="Lam B."/>
            <person name="Sakano H."/>
            <person name="Wu T."/>
            <person name="Yu G."/>
            <person name="Miranda M."/>
            <person name="Quach H.L."/>
            <person name="Tripp M."/>
            <person name="Chang C.H."/>
            <person name="Lee J.M."/>
            <person name="Toriumi M.J."/>
            <person name="Chan M.M."/>
            <person name="Tang C.C."/>
            <person name="Onodera C.S."/>
            <person name="Deng J.M."/>
            <person name="Akiyama K."/>
            <person name="Ansari Y."/>
            <person name="Arakawa T."/>
            <person name="Banh J."/>
            <person name="Banno F."/>
            <person name="Bowser L."/>
            <person name="Brooks S.Y."/>
            <person name="Carninci P."/>
            <person name="Chao Q."/>
            <person name="Choy N."/>
            <person name="Enju A."/>
            <person name="Goldsmith A.D."/>
            <person name="Gurjal M."/>
            <person name="Hansen N.F."/>
            <person name="Hayashizaki Y."/>
            <person name="Johnson-Hopson C."/>
            <person name="Hsuan V.W."/>
            <person name="Iida K."/>
            <person name="Karnes M."/>
            <person name="Khan S."/>
            <person name="Koesema E."/>
            <person name="Ishida J."/>
            <person name="Jiang P.X."/>
            <person name="Jones T."/>
            <person name="Kawai J."/>
            <person name="Kamiya A."/>
            <person name="Meyers C."/>
            <person name="Nakajima M."/>
            <person name="Narusaka M."/>
            <person name="Seki M."/>
            <person name="Sakurai T."/>
            <person name="Satou M."/>
            <person name="Tamse R."/>
            <person name="Vaysberg M."/>
            <person name="Wallender E.K."/>
            <person name="Wong C."/>
            <person name="Yamamura Y."/>
            <person name="Yuan S."/>
            <person name="Shinozaki K."/>
            <person name="Davis R.W."/>
            <person name="Theologis A."/>
            <person name="Ecker J.R."/>
        </authorList>
    </citation>
    <scope>NUCLEOTIDE SEQUENCE [LARGE SCALE MRNA]</scope>
    <source>
        <strain>cv. Columbia</strain>
    </source>
</reference>
<reference key="5">
    <citation type="journal article" date="2003" name="Plant Physiol.">
        <title>Arabidopsis contains a large superfamily of acyl-activating enzymes. Phylogenetic and biochemical analysis reveals a new class of acyl-coenzyme a synthetases.</title>
        <authorList>
            <person name="Shockey J.M."/>
            <person name="Fulda M.S."/>
            <person name="Browse J."/>
        </authorList>
    </citation>
    <scope>TISSUE SPECIFICITY</scope>
    <scope>GENE FAMILY</scope>
    <scope>NOMENCLATURE</scope>
</reference>
<dbReference type="EC" id="6.2.1.-"/>
<dbReference type="EMBL" id="AF503767">
    <property type="protein sequence ID" value="AAM28625.1"/>
    <property type="molecule type" value="mRNA"/>
</dbReference>
<dbReference type="EMBL" id="AC007396">
    <property type="protein sequence ID" value="AAF26762.1"/>
    <property type="molecule type" value="Genomic_DNA"/>
</dbReference>
<dbReference type="EMBL" id="CP002684">
    <property type="protein sequence ID" value="AEE35781.1"/>
    <property type="molecule type" value="Genomic_DNA"/>
</dbReference>
<dbReference type="EMBL" id="AY070450">
    <property type="protein sequence ID" value="AAL49853.1"/>
    <property type="molecule type" value="mRNA"/>
</dbReference>
<dbReference type="EMBL" id="AY142663">
    <property type="protein sequence ID" value="AAN13201.1"/>
    <property type="molecule type" value="mRNA"/>
</dbReference>
<dbReference type="RefSeq" id="NP_177724.1">
    <property type="nucleotide sequence ID" value="NM_106246.4"/>
</dbReference>
<dbReference type="SMR" id="Q9LQS1"/>
<dbReference type="FunCoup" id="Q9LQS1">
    <property type="interactions" value="150"/>
</dbReference>
<dbReference type="STRING" id="3702.Q9LQS1"/>
<dbReference type="iPTMnet" id="Q9LQS1"/>
<dbReference type="PaxDb" id="3702-AT1G75960.1"/>
<dbReference type="ProteomicsDB" id="244506"/>
<dbReference type="EnsemblPlants" id="AT1G75960.1">
    <property type="protein sequence ID" value="AT1G75960.1"/>
    <property type="gene ID" value="AT1G75960"/>
</dbReference>
<dbReference type="GeneID" id="843929"/>
<dbReference type="Gramene" id="AT1G75960.1">
    <property type="protein sequence ID" value="AT1G75960.1"/>
    <property type="gene ID" value="AT1G75960"/>
</dbReference>
<dbReference type="KEGG" id="ath:AT1G75960"/>
<dbReference type="Araport" id="AT1G75960"/>
<dbReference type="TAIR" id="AT1G75960"/>
<dbReference type="eggNOG" id="KOG1176">
    <property type="taxonomic scope" value="Eukaryota"/>
</dbReference>
<dbReference type="HOGENOM" id="CLU_000022_59_5_1"/>
<dbReference type="InParanoid" id="Q9LQS1"/>
<dbReference type="OMA" id="WEFNQIY"/>
<dbReference type="PhylomeDB" id="Q9LQS1"/>
<dbReference type="BioCyc" id="ARA:AT1G75960-MONOMER"/>
<dbReference type="PRO" id="PR:Q9LQS1"/>
<dbReference type="Proteomes" id="UP000006548">
    <property type="component" value="Chromosome 1"/>
</dbReference>
<dbReference type="ExpressionAtlas" id="Q9LQS1">
    <property type="expression patterns" value="baseline and differential"/>
</dbReference>
<dbReference type="GO" id="GO:0016874">
    <property type="term" value="F:ligase activity"/>
    <property type="evidence" value="ECO:0007669"/>
    <property type="project" value="UniProtKB-KW"/>
</dbReference>
<dbReference type="GO" id="GO:0006631">
    <property type="term" value="P:fatty acid metabolic process"/>
    <property type="evidence" value="ECO:0007669"/>
    <property type="project" value="UniProtKB-KW"/>
</dbReference>
<dbReference type="CDD" id="cd12118">
    <property type="entry name" value="ttLC_FACS_AEE21_like"/>
    <property type="match status" value="1"/>
</dbReference>
<dbReference type="FunFam" id="3.30.300.30:FF:000008">
    <property type="entry name" value="2,3-dihydroxybenzoate-AMP ligase"/>
    <property type="match status" value="1"/>
</dbReference>
<dbReference type="Gene3D" id="3.30.300.30">
    <property type="match status" value="1"/>
</dbReference>
<dbReference type="Gene3D" id="3.40.50.12780">
    <property type="entry name" value="N-terminal domain of ligase-like"/>
    <property type="match status" value="1"/>
</dbReference>
<dbReference type="InterPro" id="IPR025110">
    <property type="entry name" value="AMP-bd_C"/>
</dbReference>
<dbReference type="InterPro" id="IPR045851">
    <property type="entry name" value="AMP-bd_C_sf"/>
</dbReference>
<dbReference type="InterPro" id="IPR020845">
    <property type="entry name" value="AMP-binding_CS"/>
</dbReference>
<dbReference type="InterPro" id="IPR000873">
    <property type="entry name" value="AMP-dep_synth/lig_dom"/>
</dbReference>
<dbReference type="InterPro" id="IPR042099">
    <property type="entry name" value="ANL_N_sf"/>
</dbReference>
<dbReference type="NCBIfam" id="NF006020">
    <property type="entry name" value="PRK08162.1"/>
    <property type="match status" value="1"/>
</dbReference>
<dbReference type="PANTHER" id="PTHR43859">
    <property type="entry name" value="ACYL-ACTIVATING ENZYME"/>
    <property type="match status" value="1"/>
</dbReference>
<dbReference type="PANTHER" id="PTHR43859:SF57">
    <property type="entry name" value="ACYL-ACTIVATING ENZYME 8-RELATED"/>
    <property type="match status" value="1"/>
</dbReference>
<dbReference type="Pfam" id="PF00501">
    <property type="entry name" value="AMP-binding"/>
    <property type="match status" value="1"/>
</dbReference>
<dbReference type="Pfam" id="PF13193">
    <property type="entry name" value="AMP-binding_C"/>
    <property type="match status" value="1"/>
</dbReference>
<dbReference type="SUPFAM" id="SSF56801">
    <property type="entry name" value="Acetyl-CoA synthetase-like"/>
    <property type="match status" value="1"/>
</dbReference>
<dbReference type="PROSITE" id="PS00455">
    <property type="entry name" value="AMP_BINDING"/>
    <property type="match status" value="1"/>
</dbReference>
<proteinExistence type="evidence at transcript level"/>
<keyword id="KW-0276">Fatty acid metabolism</keyword>
<keyword id="KW-0436">Ligase</keyword>
<keyword id="KW-0443">Lipid metabolism</keyword>
<keyword id="KW-1185">Reference proteome</keyword>
<accession>Q9LQS1</accession>
<accession>Q8LRT4</accession>
<organism>
    <name type="scientific">Arabidopsis thaliana</name>
    <name type="common">Mouse-ear cress</name>
    <dbReference type="NCBI Taxonomy" id="3702"/>
    <lineage>
        <taxon>Eukaryota</taxon>
        <taxon>Viridiplantae</taxon>
        <taxon>Streptophyta</taxon>
        <taxon>Embryophyta</taxon>
        <taxon>Tracheophyta</taxon>
        <taxon>Spermatophyta</taxon>
        <taxon>Magnoliopsida</taxon>
        <taxon>eudicotyledons</taxon>
        <taxon>Gunneridae</taxon>
        <taxon>Pentapetalae</taxon>
        <taxon>rosids</taxon>
        <taxon>malvids</taxon>
        <taxon>Brassicales</taxon>
        <taxon>Brassicaceae</taxon>
        <taxon>Camelineae</taxon>
        <taxon>Arabidopsis</taxon>
    </lineage>
</organism>
<sequence length="544" mass="59711">MEDLKPSAANSLPLTLLGFLERAATVYGDCTSIVYGNSTVYTWRETNHRCLCVASALSSIGIGRSDVVSVLSANTPEMYELQFSVPMSGAILNNINTRLDARTVSVLLRHCESKLLFVDFFYSDLAVEAITMLLNPPILVLIANEEEEEGGAEVTERSKFCYLYSDLITRGNPDFKWIRPGSEWDPIVVNYTSGTTSSPKGVVHCHRGIFVMTLDSLTDWAVPKTPVYLWTLPIFHANGWTYPWGIAAVGGTNVCVRKLHAPSIYHLIRDHGVTHMYGAPIVLQILSASQESDQPLKSPVNFLTAGSSPPATVLLRAESLGFIVSHGYGLTETAGVIVSCAWKPNWNRLPASDQAQLKSRQGVRTVGFSEIDVVDPESGRSVERDGETVGEIVLRGSSIMLGYLKNPIGTQNSFKNGWFFTGDLGVIHGDGYLEIKDRSKDVIISGGENVSSVEVEAVLYTNPAVNEAAVVARPDEFWGETPCAFVSLKPGLTRKPTDKEIIEYCKYKMPRYMAPKTVSFLEELPKTSTGKIIKSLLKEIAKNM</sequence>
<feature type="chain" id="PRO_0000415719" description="Probable acyl-activating enzyme 8">
    <location>
        <begin position="1"/>
        <end position="544"/>
    </location>
</feature>
<feature type="sequence conflict" description="In Ref. 1; AAM28625." evidence="3" ref="1">
    <original>DLK</original>
    <variation>E</variation>
    <location>
        <begin position="3"/>
        <end position="5"/>
    </location>
</feature>